<protein>
    <recommendedName>
        <fullName evidence="1 4">Circadian clock oscillator protein KaiB</fullName>
    </recommendedName>
</protein>
<comment type="function">
    <text evidence="1">Component of the KaiBC clock protein complex, which constitutes the main circadian regulator in cyanobacteria; it may modify the ATPase activity of KaiC.</text>
</comment>
<comment type="function">
    <text evidence="2">Does not stimulate dephosphorylation of endogenous KaiC, although it does stimulate dephosphorylation of KiaC from S.elongatus strain PCC 7942. Reduces the ATPase activity of KaiC by about half in vitro, which may be its function in vivo.</text>
</comment>
<comment type="function">
    <text evidence="1">May be a metamorphic protein which reversibly switches between an inactive tetrameric fold and a rare, thioredoxin-like monomeric fold (KaiB(fs)). KaiB(fs) binds phospho-KaiC, and perhaps clock output effectors.</text>
</comment>
<comment type="subunit">
    <text evidence="1">May undergo a major conformational rearrangment; in the free state forms homooligomers. When bound to KaiC switches to a monomeric thioredoxin-fold (KaiB(fs)). The active oscillator complex is probably KaiC(6):KaiB(6).</text>
</comment>
<comment type="domain">
    <text evidence="1">Has 2 forms, fold switches to a thioredoxin-like fold (KaiB(fs)) when bound to KaiC.</text>
</comment>
<comment type="miscellaneous">
    <text evidence="1 5">The kiaA gene has been eliminated from Prochlorococcus during genome streamlining. It has been suggested that the central oscillator in Prochlorococcus does not have to be as robust as in other cyanobacteria because the former live in specific niches of the Earth's oceans; they divide exactly once a day and at the same time. Thus gene loss and changes in kaiB function compared to other cyanobacteria, can occur.</text>
</comment>
<comment type="similarity">
    <text evidence="1">Belongs to the KaiB family.</text>
</comment>
<keyword id="KW-0090">Biological rhythms</keyword>
<proteinExistence type="inferred from homology"/>
<reference evidence="6" key="1">
    <citation type="journal article" date="2003" name="Nature">
        <title>Genome divergence in two Prochlorococcus ecotypes reflects oceanic niche differentiation.</title>
        <authorList>
            <person name="Rocap G."/>
            <person name="Larimer F.W."/>
            <person name="Lamerdin J.E."/>
            <person name="Malfatti S."/>
            <person name="Chain P."/>
            <person name="Ahlgren N.A."/>
            <person name="Arellano A."/>
            <person name="Coleman M."/>
            <person name="Hauser L."/>
            <person name="Hess W.R."/>
            <person name="Johnson Z.I."/>
            <person name="Land M.L."/>
            <person name="Lindell D."/>
            <person name="Post A.F."/>
            <person name="Regala W."/>
            <person name="Shah M."/>
            <person name="Shaw S.L."/>
            <person name="Steglich C."/>
            <person name="Sullivan M.B."/>
            <person name="Ting C.S."/>
            <person name="Tolonen A."/>
            <person name="Webb E.A."/>
            <person name="Zinser E.R."/>
            <person name="Chisholm S.W."/>
        </authorList>
    </citation>
    <scope>NUCLEOTIDE SEQUENCE [LARGE SCALE GENOMIC DNA]</scope>
    <source>
        <strain>CCMP1986 / NIES-2087 / MED4</strain>
    </source>
</reference>
<reference key="2">
    <citation type="journal article" date="2009" name="J. Bacteriol.">
        <title>Biochemical evidence for a timing mechanism in prochlorococcus.</title>
        <authorList>
            <person name="Axmann I.M."/>
            <person name="Duehring U."/>
            <person name="Seeliger L."/>
            <person name="Arnold A."/>
            <person name="Vanselow J.T."/>
            <person name="Kramer A."/>
            <person name="Wilde A."/>
        </authorList>
    </citation>
    <scope>FUNCTION</scope>
    <source>
        <strain>CCMP1986 / NIES-2087 / MED4</strain>
    </source>
</reference>
<organism>
    <name type="scientific">Prochlorococcus marinus subsp. pastoris (strain CCMP1986 / NIES-2087 / MED4)</name>
    <dbReference type="NCBI Taxonomy" id="59919"/>
    <lineage>
        <taxon>Bacteria</taxon>
        <taxon>Bacillati</taxon>
        <taxon>Cyanobacteriota</taxon>
        <taxon>Cyanophyceae</taxon>
        <taxon>Synechococcales</taxon>
        <taxon>Prochlorococcaceae</taxon>
        <taxon>Prochlorococcus</taxon>
    </lineage>
</organism>
<feature type="chain" id="PRO_0000217764" description="Circadian clock oscillator protein KaiB">
    <location>
        <begin position="1"/>
        <end position="107"/>
    </location>
</feature>
<name>KAIB_PROMP</name>
<dbReference type="EMBL" id="BX548174">
    <property type="protein sequence ID" value="CAE19802.1"/>
    <property type="molecule type" value="Genomic_DNA"/>
</dbReference>
<dbReference type="RefSeq" id="WP_011132977.1">
    <property type="nucleotide sequence ID" value="NC_005072.1"/>
</dbReference>
<dbReference type="SMR" id="Q7V0C3"/>
<dbReference type="STRING" id="59919.PMM1343"/>
<dbReference type="KEGG" id="pmm:PMM1343"/>
<dbReference type="eggNOG" id="COG4251">
    <property type="taxonomic scope" value="Bacteria"/>
</dbReference>
<dbReference type="HOGENOM" id="CLU_144073_0_0_3"/>
<dbReference type="OrthoDB" id="5458519at2"/>
<dbReference type="Proteomes" id="UP000001026">
    <property type="component" value="Chromosome"/>
</dbReference>
<dbReference type="GO" id="GO:0007623">
    <property type="term" value="P:circadian rhythm"/>
    <property type="evidence" value="ECO:0007669"/>
    <property type="project" value="UniProtKB-UniRule"/>
</dbReference>
<dbReference type="CDD" id="cd02978">
    <property type="entry name" value="KaiB_like"/>
    <property type="match status" value="1"/>
</dbReference>
<dbReference type="Gene3D" id="3.40.30.10">
    <property type="entry name" value="Glutaredoxin"/>
    <property type="match status" value="1"/>
</dbReference>
<dbReference type="HAMAP" id="MF_01835">
    <property type="entry name" value="KaiB"/>
    <property type="match status" value="1"/>
</dbReference>
<dbReference type="InterPro" id="IPR013474">
    <property type="entry name" value="Circ_KaiB"/>
</dbReference>
<dbReference type="InterPro" id="IPR039022">
    <property type="entry name" value="KaiB-like"/>
</dbReference>
<dbReference type="InterPro" id="IPR011649">
    <property type="entry name" value="KaiB_domain"/>
</dbReference>
<dbReference type="InterPro" id="IPR036249">
    <property type="entry name" value="Thioredoxin-like_sf"/>
</dbReference>
<dbReference type="NCBIfam" id="TIGR02654">
    <property type="entry name" value="circ_KaiB"/>
    <property type="match status" value="1"/>
</dbReference>
<dbReference type="NCBIfam" id="NF006798">
    <property type="entry name" value="PRK09301.1"/>
    <property type="match status" value="1"/>
</dbReference>
<dbReference type="PANTHER" id="PTHR41709:SF2">
    <property type="entry name" value="CIRCADIAN CLOCK PROTEIN KAIB2"/>
    <property type="match status" value="1"/>
</dbReference>
<dbReference type="PANTHER" id="PTHR41709">
    <property type="entry name" value="KAIB-LIKE PROTEIN 1"/>
    <property type="match status" value="1"/>
</dbReference>
<dbReference type="Pfam" id="PF07689">
    <property type="entry name" value="KaiB"/>
    <property type="match status" value="1"/>
</dbReference>
<dbReference type="SMART" id="SM01248">
    <property type="entry name" value="KaiB"/>
    <property type="match status" value="1"/>
</dbReference>
<dbReference type="SUPFAM" id="SSF52833">
    <property type="entry name" value="Thioredoxin-like"/>
    <property type="match status" value="1"/>
</dbReference>
<sequence>MVARKTYILKLYVAGNTPNSMRALNTLKEILENEFKGVYALKVIDVLKQPQLAEEDKILATPTLAKILPPPVRRIIGDLSDREKVLIGLDLLFDELSESEYSGGTKN</sequence>
<gene>
    <name evidence="1 3" type="primary">kaiB</name>
    <name type="ordered locus">PMM1343</name>
</gene>
<evidence type="ECO:0000255" key="1">
    <source>
        <dbReference type="HAMAP-Rule" id="MF_01835"/>
    </source>
</evidence>
<evidence type="ECO:0000269" key="2">
    <source>
    </source>
</evidence>
<evidence type="ECO:0000303" key="3">
    <source>
    </source>
</evidence>
<evidence type="ECO:0000303" key="4">
    <source>
    </source>
</evidence>
<evidence type="ECO:0000305" key="5">
    <source>
    </source>
</evidence>
<evidence type="ECO:0000312" key="6">
    <source>
        <dbReference type="EMBL" id="CAE19802.1"/>
    </source>
</evidence>
<accession>Q7V0C3</accession>